<keyword id="KW-0489">Methyltransferase</keyword>
<keyword id="KW-1185">Reference proteome</keyword>
<keyword id="KW-0808">Transferase</keyword>
<feature type="chain" id="PRO_0000446348" description="O-methyltransferase adaD">
    <location>
        <begin position="1"/>
        <end position="249"/>
    </location>
</feature>
<feature type="region of interest" description="Disordered" evidence="2">
    <location>
        <begin position="1"/>
        <end position="26"/>
    </location>
</feature>
<feature type="compositionally biased region" description="Low complexity" evidence="2">
    <location>
        <begin position="1"/>
        <end position="15"/>
    </location>
</feature>
<proteinExistence type="evidence at protein level"/>
<reference key="1">
    <citation type="journal article" date="2007" name="Nat. Biotechnol.">
        <title>Genome sequencing and analysis of the versatile cell factory Aspergillus niger CBS 513.88.</title>
        <authorList>
            <person name="Pel H.J."/>
            <person name="de Winde J.H."/>
            <person name="Archer D.B."/>
            <person name="Dyer P.S."/>
            <person name="Hofmann G."/>
            <person name="Schaap P.J."/>
            <person name="Turner G."/>
            <person name="de Vries R.P."/>
            <person name="Albang R."/>
            <person name="Albermann K."/>
            <person name="Andersen M.R."/>
            <person name="Bendtsen J.D."/>
            <person name="Benen J.A.E."/>
            <person name="van den Berg M."/>
            <person name="Breestraat S."/>
            <person name="Caddick M.X."/>
            <person name="Contreras R."/>
            <person name="Cornell M."/>
            <person name="Coutinho P.M."/>
            <person name="Danchin E.G.J."/>
            <person name="Debets A.J.M."/>
            <person name="Dekker P."/>
            <person name="van Dijck P.W.M."/>
            <person name="van Dijk A."/>
            <person name="Dijkhuizen L."/>
            <person name="Driessen A.J.M."/>
            <person name="d'Enfert C."/>
            <person name="Geysens S."/>
            <person name="Goosen C."/>
            <person name="Groot G.S.P."/>
            <person name="de Groot P.W.J."/>
            <person name="Guillemette T."/>
            <person name="Henrissat B."/>
            <person name="Herweijer M."/>
            <person name="van den Hombergh J.P.T.W."/>
            <person name="van den Hondel C.A.M.J.J."/>
            <person name="van der Heijden R.T.J.M."/>
            <person name="van der Kaaij R.M."/>
            <person name="Klis F.M."/>
            <person name="Kools H.J."/>
            <person name="Kubicek C.P."/>
            <person name="van Kuyk P.A."/>
            <person name="Lauber J."/>
            <person name="Lu X."/>
            <person name="van der Maarel M.J.E.C."/>
            <person name="Meulenberg R."/>
            <person name="Menke H."/>
            <person name="Mortimer M.A."/>
            <person name="Nielsen J."/>
            <person name="Oliver S.G."/>
            <person name="Olsthoorn M."/>
            <person name="Pal K."/>
            <person name="van Peij N.N.M.E."/>
            <person name="Ram A.F.J."/>
            <person name="Rinas U."/>
            <person name="Roubos J.A."/>
            <person name="Sagt C.M.J."/>
            <person name="Schmoll M."/>
            <person name="Sun J."/>
            <person name="Ussery D."/>
            <person name="Varga J."/>
            <person name="Vervecken W."/>
            <person name="van de Vondervoort P.J.J."/>
            <person name="Wedler H."/>
            <person name="Woesten H.A.B."/>
            <person name="Zeng A.-P."/>
            <person name="van Ooyen A.J.J."/>
            <person name="Visser J."/>
            <person name="Stam H."/>
        </authorList>
    </citation>
    <scope>NUCLEOTIDE SEQUENCE [LARGE SCALE GENOMIC DNA]</scope>
    <source>
        <strain>ATCC MYA-4892 / CBS 513.88 / FGSC A1513</strain>
    </source>
</reference>
<reference key="2">
    <citation type="journal article" date="2011" name="J. Am. Chem. Soc.">
        <title>Comparative characterization of fungal anthracenone and naphthacenedione biosynthetic pathways reveals an alpha-hydroxylation-dependent Claisen-like cyclization catalyzed by a dimanganese thioesterase.</title>
        <authorList>
            <person name="Li Y."/>
            <person name="Chooi Y.H."/>
            <person name="Sheng Y."/>
            <person name="Valentine J.S."/>
            <person name="Tang Y."/>
        </authorList>
    </citation>
    <scope>IDENTIFICATION</scope>
    <scope>FUNCTION</scope>
    <scope>CATALYTIC ACTIVITY</scope>
    <scope>PATHWAY</scope>
</reference>
<name>ADAD_ASPNC</name>
<dbReference type="EC" id="2.1.1.-" evidence="3"/>
<dbReference type="EMBL" id="AM270243">
    <property type="protein sequence ID" value="CAK40781.1"/>
    <property type="molecule type" value="Genomic_DNA"/>
</dbReference>
<dbReference type="RefSeq" id="XP_001394708.1">
    <property type="nucleotide sequence ID" value="XM_001394671.1"/>
</dbReference>
<dbReference type="EnsemblFungi" id="CAK40781">
    <property type="protein sequence ID" value="CAK40781"/>
    <property type="gene ID" value="An11g07340"/>
</dbReference>
<dbReference type="GeneID" id="4984954"/>
<dbReference type="KEGG" id="ang:An11g07340"/>
<dbReference type="VEuPathDB" id="FungiDB:An11g07340"/>
<dbReference type="HOGENOM" id="CLU_046029_0_0_1"/>
<dbReference type="Proteomes" id="UP000006706">
    <property type="component" value="Chromosome 7R"/>
</dbReference>
<dbReference type="GO" id="GO:0008168">
    <property type="term" value="F:methyltransferase activity"/>
    <property type="evidence" value="ECO:0007669"/>
    <property type="project" value="UniProtKB-KW"/>
</dbReference>
<dbReference type="GO" id="GO:0032259">
    <property type="term" value="P:methylation"/>
    <property type="evidence" value="ECO:0007669"/>
    <property type="project" value="UniProtKB-KW"/>
</dbReference>
<dbReference type="Gene3D" id="3.40.50.150">
    <property type="entry name" value="Vaccinia Virus protein VP39"/>
    <property type="match status" value="1"/>
</dbReference>
<dbReference type="InterPro" id="IPR025714">
    <property type="entry name" value="Methyltranfer_dom"/>
</dbReference>
<dbReference type="InterPro" id="IPR016584">
    <property type="entry name" value="MeTrfase_VrtF"/>
</dbReference>
<dbReference type="InterPro" id="IPR029063">
    <property type="entry name" value="SAM-dependent_MTases_sf"/>
</dbReference>
<dbReference type="Pfam" id="PF13847">
    <property type="entry name" value="Methyltransf_31"/>
    <property type="match status" value="1"/>
</dbReference>
<dbReference type="PIRSF" id="PIRSF011491">
    <property type="entry name" value="Mtase_YbcY_prd"/>
    <property type="match status" value="1"/>
</dbReference>
<dbReference type="SUPFAM" id="SSF53335">
    <property type="entry name" value="S-adenosyl-L-methionine-dependent methyltransferases"/>
    <property type="match status" value="1"/>
</dbReference>
<sequence>MSSVTLTTTTTTTSTPPKPTPKDEPQEQIYTPWRLFIYDIWVLGIVSTLAWGCRISTYLIPLFRSNVGKKHLDIGAGTGYYLNQARIPSTTQLTIVDNETHALNVALARCKHPSTQTHGIVTDILQPSPFPETYLTNNDKKFDSVSMYYLLHCLPVPVASKCKIFTHLKKYMTEDGVVHGANVLGKGVRKDNWFARIIRRGCLNHGVFHNEEDNAYEFERALRENFWEVETWVVGSVFVFRAKRPILDA</sequence>
<organism>
    <name type="scientific">Aspergillus niger (strain ATCC MYA-4892 / CBS 513.88 / FGSC A1513)</name>
    <dbReference type="NCBI Taxonomy" id="425011"/>
    <lineage>
        <taxon>Eukaryota</taxon>
        <taxon>Fungi</taxon>
        <taxon>Dikarya</taxon>
        <taxon>Ascomycota</taxon>
        <taxon>Pezizomycotina</taxon>
        <taxon>Eurotiomycetes</taxon>
        <taxon>Eurotiomycetidae</taxon>
        <taxon>Eurotiales</taxon>
        <taxon>Aspergillaceae</taxon>
        <taxon>Aspergillus</taxon>
        <taxon>Aspergillus subgen. Circumdati</taxon>
    </lineage>
</organism>
<comment type="function">
    <text evidence="3">O-methyltransferase; part of the gene cluster that mediates the biosynthesis of the linear tetracyclic TAN-1612 neuropeptide Y receptor antagonist (PubMed:21866960). The decaketide backbone of TAN-1612 is synthesized by the non-reducing polyketide synthase adaA via condensation of one acetyl-CoA starter unit with 9 malonyl-CoA units. The FAD-dependent monooxygenase adaC then performs hydroxylation at C2 while the polaketide chain is still attached to the NRPKS adaA (PubMed:21866960). The alpha-hydroxylation step at C2 appears to be crucial for the following C18-C1 Claisen cyclization and release of the C9-hydroxyl version of TAN-1612 from the NRPKS adaA, two steps performed by the lactamase-like protein adaB (PubMed:21866960). Finally, the O-methyltransferase adaD performs the C9 O-methylation to complete the biosynthesis of TAN-1612 (PubMed:21866960).</text>
</comment>
<comment type="catalytic activity">
    <reaction evidence="3">
        <text>2-acetyl-3,4a,8,10,11,12a-hexahydroxy-1,4,4a,5,12,12a-hexahydrotetracene-1,12-dione + S-adenosyl-L-methionine = TAN-1612 + S-adenosyl-L-homocysteine + H(+)</text>
        <dbReference type="Rhea" id="RHEA:64100"/>
        <dbReference type="ChEBI" id="CHEBI:15378"/>
        <dbReference type="ChEBI" id="CHEBI:57856"/>
        <dbReference type="ChEBI" id="CHEBI:59789"/>
        <dbReference type="ChEBI" id="CHEBI:146217"/>
        <dbReference type="ChEBI" id="CHEBI:146218"/>
    </reaction>
    <physiologicalReaction direction="left-to-right" evidence="3">
        <dbReference type="Rhea" id="RHEA:64101"/>
    </physiologicalReaction>
</comment>
<comment type="pathway">
    <text evidence="3">Secondary metabolite biosynthesis.</text>
</comment>
<comment type="similarity">
    <text evidence="1">Belongs to the methyltransferase superfamily.</text>
</comment>
<protein>
    <recommendedName>
        <fullName evidence="4">O-methyltransferase adaD</fullName>
        <ecNumber evidence="3">2.1.1.-</ecNumber>
    </recommendedName>
    <alternativeName>
        <fullName evidence="4">2-acetyl-2-decarboxamidoanthrotainin biosynthesis cluster protein D</fullName>
    </alternativeName>
</protein>
<gene>
    <name evidence="4" type="primary">adaD</name>
    <name type="ORF">An11g07340</name>
</gene>
<evidence type="ECO:0000255" key="1"/>
<evidence type="ECO:0000256" key="2">
    <source>
        <dbReference type="SAM" id="MobiDB-lite"/>
    </source>
</evidence>
<evidence type="ECO:0000269" key="3">
    <source>
    </source>
</evidence>
<evidence type="ECO:0000303" key="4">
    <source>
    </source>
</evidence>
<accession>A2QX25</accession>